<dbReference type="EC" id="2.3.1.234" evidence="1"/>
<dbReference type="EMBL" id="CR380958">
    <property type="protein sequence ID" value="CAG61883.1"/>
    <property type="molecule type" value="Genomic_DNA"/>
</dbReference>
<dbReference type="RefSeq" id="XP_448913.1">
    <property type="nucleotide sequence ID" value="XM_448913.1"/>
</dbReference>
<dbReference type="SMR" id="Q6FLI1"/>
<dbReference type="FunCoup" id="Q6FLI1">
    <property type="interactions" value="624"/>
</dbReference>
<dbReference type="STRING" id="284593.Q6FLI1"/>
<dbReference type="EnsemblFungi" id="CAGL0L03245g-T">
    <property type="protein sequence ID" value="CAGL0L03245g-T-p1"/>
    <property type="gene ID" value="CAGL0L03245g"/>
</dbReference>
<dbReference type="KEGG" id="cgr:2890852"/>
<dbReference type="CGD" id="CAL0135156">
    <property type="gene designation" value="CAGL0L03245g"/>
</dbReference>
<dbReference type="VEuPathDB" id="FungiDB:CAGL0L03245g"/>
<dbReference type="eggNOG" id="KOG2708">
    <property type="taxonomic scope" value="Eukaryota"/>
</dbReference>
<dbReference type="HOGENOM" id="CLU_023208_2_2_1"/>
<dbReference type="InParanoid" id="Q6FLI1"/>
<dbReference type="OMA" id="HHRSWVV"/>
<dbReference type="Proteomes" id="UP000002428">
    <property type="component" value="Chromosome L"/>
</dbReference>
<dbReference type="GO" id="GO:0000785">
    <property type="term" value="C:chromatin"/>
    <property type="evidence" value="ECO:0007669"/>
    <property type="project" value="EnsemblFungi"/>
</dbReference>
<dbReference type="GO" id="GO:0005737">
    <property type="term" value="C:cytoplasm"/>
    <property type="evidence" value="ECO:0007669"/>
    <property type="project" value="UniProtKB-SubCell"/>
</dbReference>
<dbReference type="GO" id="GO:0000408">
    <property type="term" value="C:EKC/KEOPS complex"/>
    <property type="evidence" value="ECO:0007669"/>
    <property type="project" value="EnsemblFungi"/>
</dbReference>
<dbReference type="GO" id="GO:0005634">
    <property type="term" value="C:nucleus"/>
    <property type="evidence" value="ECO:0007669"/>
    <property type="project" value="UniProtKB-SubCell"/>
</dbReference>
<dbReference type="GO" id="GO:0031490">
    <property type="term" value="F:chromatin DNA binding"/>
    <property type="evidence" value="ECO:0007669"/>
    <property type="project" value="EnsemblFungi"/>
</dbReference>
<dbReference type="GO" id="GO:0046872">
    <property type="term" value="F:metal ion binding"/>
    <property type="evidence" value="ECO:0007669"/>
    <property type="project" value="UniProtKB-KW"/>
</dbReference>
<dbReference type="GO" id="GO:0061711">
    <property type="term" value="F:N(6)-L-threonylcarbamoyladenine synthase activity"/>
    <property type="evidence" value="ECO:0007669"/>
    <property type="project" value="UniProtKB-EC"/>
</dbReference>
<dbReference type="GO" id="GO:0008252">
    <property type="term" value="F:nucleotidase activity"/>
    <property type="evidence" value="ECO:0007669"/>
    <property type="project" value="EnsemblFungi"/>
</dbReference>
<dbReference type="GO" id="GO:0045944">
    <property type="term" value="P:positive regulation of transcription by RNA polymerase II"/>
    <property type="evidence" value="ECO:0007669"/>
    <property type="project" value="EnsemblFungi"/>
</dbReference>
<dbReference type="GO" id="GO:0000722">
    <property type="term" value="P:telomere maintenance via recombination"/>
    <property type="evidence" value="ECO:0007669"/>
    <property type="project" value="EnsemblFungi"/>
</dbReference>
<dbReference type="GO" id="GO:0002949">
    <property type="term" value="P:tRNA threonylcarbamoyladenosine modification"/>
    <property type="evidence" value="ECO:0007669"/>
    <property type="project" value="UniProtKB-UniRule"/>
</dbReference>
<dbReference type="CDD" id="cd24132">
    <property type="entry name" value="ASKHA_NBD_OSGEP_like_euk"/>
    <property type="match status" value="1"/>
</dbReference>
<dbReference type="FunFam" id="3.30.420.40:FF:000038">
    <property type="entry name" value="Probable tRNA N6-adenosine threonylcarbamoyltransferase"/>
    <property type="match status" value="1"/>
</dbReference>
<dbReference type="FunFam" id="3.30.420.40:FF:000295">
    <property type="entry name" value="Probable tRNA N6-adenosine threonylcarbamoyltransferase"/>
    <property type="match status" value="1"/>
</dbReference>
<dbReference type="Gene3D" id="3.30.420.40">
    <property type="match status" value="2"/>
</dbReference>
<dbReference type="HAMAP" id="MF_01446">
    <property type="entry name" value="Kae1"/>
    <property type="match status" value="1"/>
</dbReference>
<dbReference type="InterPro" id="IPR043129">
    <property type="entry name" value="ATPase_NBD"/>
</dbReference>
<dbReference type="InterPro" id="IPR000905">
    <property type="entry name" value="Gcp-like_dom"/>
</dbReference>
<dbReference type="InterPro" id="IPR017861">
    <property type="entry name" value="KAE1/TsaD"/>
</dbReference>
<dbReference type="InterPro" id="IPR034680">
    <property type="entry name" value="Kae1_archaea_euk"/>
</dbReference>
<dbReference type="InterPro" id="IPR017860">
    <property type="entry name" value="Peptidase_M22_CS"/>
</dbReference>
<dbReference type="NCBIfam" id="TIGR00329">
    <property type="entry name" value="gcp_kae1"/>
    <property type="match status" value="1"/>
</dbReference>
<dbReference type="PANTHER" id="PTHR11735">
    <property type="entry name" value="TRNA N6-ADENOSINE THREONYLCARBAMOYLTRANSFERASE"/>
    <property type="match status" value="1"/>
</dbReference>
<dbReference type="PANTHER" id="PTHR11735:SF14">
    <property type="entry name" value="TRNA N6-ADENOSINE THREONYLCARBAMOYLTRANSFERASE"/>
    <property type="match status" value="1"/>
</dbReference>
<dbReference type="Pfam" id="PF00814">
    <property type="entry name" value="TsaD"/>
    <property type="match status" value="1"/>
</dbReference>
<dbReference type="PRINTS" id="PR00789">
    <property type="entry name" value="OSIALOPTASE"/>
</dbReference>
<dbReference type="SUPFAM" id="SSF53067">
    <property type="entry name" value="Actin-like ATPase domain"/>
    <property type="match status" value="1"/>
</dbReference>
<dbReference type="PROSITE" id="PS01016">
    <property type="entry name" value="GLYCOPROTEASE"/>
    <property type="match status" value="1"/>
</dbReference>
<comment type="function">
    <text evidence="1">Component of the EKC/KEOPS complex that is required for the formation of a threonylcarbamoyl group on adenosine at position 37 (t(6)A37) in tRNAs that read codons beginning with adenine. The complex is probably involved in the transfer of the threonylcarbamoyl moiety of threonylcarbamoyl-AMP (TC-AMP) to the N6 group of A37. KAE1 likely plays a direct catalytic role in this reaction, but requires other protein(s) of the complex to fulfill this activity. The EKC/KEOPS complex also promotes both telomere uncapping and telomere elongation. The complex is required for efficient recruitment of transcriptional coactivators.</text>
</comment>
<comment type="catalytic activity">
    <reaction evidence="1">
        <text>L-threonylcarbamoyladenylate + adenosine(37) in tRNA = N(6)-L-threonylcarbamoyladenosine(37) in tRNA + AMP + H(+)</text>
        <dbReference type="Rhea" id="RHEA:37059"/>
        <dbReference type="Rhea" id="RHEA-COMP:10162"/>
        <dbReference type="Rhea" id="RHEA-COMP:10163"/>
        <dbReference type="ChEBI" id="CHEBI:15378"/>
        <dbReference type="ChEBI" id="CHEBI:73682"/>
        <dbReference type="ChEBI" id="CHEBI:74411"/>
        <dbReference type="ChEBI" id="CHEBI:74418"/>
        <dbReference type="ChEBI" id="CHEBI:456215"/>
        <dbReference type="EC" id="2.3.1.234"/>
    </reaction>
</comment>
<comment type="cofactor">
    <cofactor evidence="1">
        <name>a divalent metal cation</name>
        <dbReference type="ChEBI" id="CHEBI:60240"/>
    </cofactor>
    <text evidence="1">Binds 1 divalent metal cation per subunit.</text>
</comment>
<comment type="subunit">
    <text evidence="1">Component of the EKC/KEOPS complex composed of at least BUD32, CGI121, GON7, KAE1 and PCC1; the whole complex dimerizes.</text>
</comment>
<comment type="subcellular location">
    <subcellularLocation>
        <location evidence="1">Cytoplasm</location>
    </subcellularLocation>
    <subcellularLocation>
        <location evidence="1">Nucleus</location>
    </subcellularLocation>
</comment>
<comment type="similarity">
    <text evidence="1">Belongs to the KAE1 / TsaD family.</text>
</comment>
<name>KAE1_CANGA</name>
<protein>
    <recommendedName>
        <fullName evidence="1">tRNA N6-adenosine threonylcarbamoyltransferase</fullName>
        <ecNumber evidence="1">2.3.1.234</ecNumber>
    </recommendedName>
    <alternativeName>
        <fullName>N6-L-threonylcarbamoyladenine synthase</fullName>
        <shortName>t(6)A synthase</shortName>
    </alternativeName>
    <alternativeName>
        <fullName evidence="1">t(6)A37 threonylcarbamoyladenosine biosynthesis protein KAE1</fullName>
    </alternativeName>
    <alternativeName>
        <fullName evidence="1">tRNA threonylcarbamoyladenosine biosynthesis protein KAE1</fullName>
    </alternativeName>
</protein>
<organism>
    <name type="scientific">Candida glabrata (strain ATCC 2001 / BCRC 20586 / JCM 3761 / NBRC 0622 / NRRL Y-65 / CBS 138)</name>
    <name type="common">Yeast</name>
    <name type="synonym">Nakaseomyces glabratus</name>
    <dbReference type="NCBI Taxonomy" id="284593"/>
    <lineage>
        <taxon>Eukaryota</taxon>
        <taxon>Fungi</taxon>
        <taxon>Dikarya</taxon>
        <taxon>Ascomycota</taxon>
        <taxon>Saccharomycotina</taxon>
        <taxon>Saccharomycetes</taxon>
        <taxon>Saccharomycetales</taxon>
        <taxon>Saccharomycetaceae</taxon>
        <taxon>Nakaseomyces</taxon>
    </lineage>
</organism>
<accession>Q6FLI1</accession>
<sequence>MVDLNGISPKNKGYYVALGLEGSANKLGVGVIKQFVDGSPTEIVSNIRDTYITPPGEGFLPRDTARHHKNWCVRLVKRALAEAGVTPGQLDAICFTKGPGMGAPLHSVVIVARTVSLLWDVPLVPVNHCIGHIEMGREITGAQNPVVLYVSGGNTQVIAYSNQKYRIFGETLDIAIGNCLDRFARTLKIPNDPSPGYNIEQMALKCKNKERLVELPYTVKGMDLSLSGILAYIDSLAKDLFRKNYSNKLLFDKKTHEQLVTVEDLCYALQETLFSMLVEITERAMAHVNSAHVLIVGGVGCNLRLQEMMEQMCMDRANGHVYATDERFCIDNGVMIAQAGLLQYRMGDYVKDFKETVVTQKFRTDEVLVSWRD</sequence>
<evidence type="ECO:0000255" key="1">
    <source>
        <dbReference type="HAMAP-Rule" id="MF_03180"/>
    </source>
</evidence>
<feature type="chain" id="PRO_0000278930" description="tRNA N6-adenosine threonylcarbamoyltransferase">
    <location>
        <begin position="1"/>
        <end position="373"/>
    </location>
</feature>
<feature type="binding site" evidence="1">
    <location>
        <position position="128"/>
    </location>
    <ligand>
        <name>a divalent metal cation</name>
        <dbReference type="ChEBI" id="CHEBI:60240"/>
    </ligand>
</feature>
<feature type="binding site" evidence="1">
    <location>
        <position position="132"/>
    </location>
    <ligand>
        <name>a divalent metal cation</name>
        <dbReference type="ChEBI" id="CHEBI:60240"/>
    </ligand>
</feature>
<feature type="binding site" evidence="1">
    <location>
        <begin position="149"/>
        <end position="153"/>
    </location>
    <ligand>
        <name>substrate</name>
    </ligand>
</feature>
<feature type="binding site" evidence="1">
    <location>
        <position position="149"/>
    </location>
    <ligand>
        <name>a divalent metal cation</name>
        <dbReference type="ChEBI" id="CHEBI:60240"/>
    </ligand>
</feature>
<feature type="binding site" evidence="1">
    <location>
        <position position="181"/>
    </location>
    <ligand>
        <name>substrate</name>
    </ligand>
</feature>
<feature type="binding site" evidence="1">
    <location>
        <position position="196"/>
    </location>
    <ligand>
        <name>substrate</name>
    </ligand>
</feature>
<feature type="binding site" evidence="1">
    <location>
        <position position="200"/>
    </location>
    <ligand>
        <name>substrate</name>
    </ligand>
</feature>
<feature type="binding site" evidence="1">
    <location>
        <position position="302"/>
    </location>
    <ligand>
        <name>substrate</name>
    </ligand>
</feature>
<feature type="binding site" evidence="1">
    <location>
        <position position="331"/>
    </location>
    <ligand>
        <name>a divalent metal cation</name>
        <dbReference type="ChEBI" id="CHEBI:60240"/>
    </ligand>
</feature>
<proteinExistence type="inferred from homology"/>
<reference key="1">
    <citation type="journal article" date="2004" name="Nature">
        <title>Genome evolution in yeasts.</title>
        <authorList>
            <person name="Dujon B."/>
            <person name="Sherman D."/>
            <person name="Fischer G."/>
            <person name="Durrens P."/>
            <person name="Casaregola S."/>
            <person name="Lafontaine I."/>
            <person name="de Montigny J."/>
            <person name="Marck C."/>
            <person name="Neuveglise C."/>
            <person name="Talla E."/>
            <person name="Goffard N."/>
            <person name="Frangeul L."/>
            <person name="Aigle M."/>
            <person name="Anthouard V."/>
            <person name="Babour A."/>
            <person name="Barbe V."/>
            <person name="Barnay S."/>
            <person name="Blanchin S."/>
            <person name="Beckerich J.-M."/>
            <person name="Beyne E."/>
            <person name="Bleykasten C."/>
            <person name="Boisrame A."/>
            <person name="Boyer J."/>
            <person name="Cattolico L."/>
            <person name="Confanioleri F."/>
            <person name="de Daruvar A."/>
            <person name="Despons L."/>
            <person name="Fabre E."/>
            <person name="Fairhead C."/>
            <person name="Ferry-Dumazet H."/>
            <person name="Groppi A."/>
            <person name="Hantraye F."/>
            <person name="Hennequin C."/>
            <person name="Jauniaux N."/>
            <person name="Joyet P."/>
            <person name="Kachouri R."/>
            <person name="Kerrest A."/>
            <person name="Koszul R."/>
            <person name="Lemaire M."/>
            <person name="Lesur I."/>
            <person name="Ma L."/>
            <person name="Muller H."/>
            <person name="Nicaud J.-M."/>
            <person name="Nikolski M."/>
            <person name="Oztas S."/>
            <person name="Ozier-Kalogeropoulos O."/>
            <person name="Pellenz S."/>
            <person name="Potier S."/>
            <person name="Richard G.-F."/>
            <person name="Straub M.-L."/>
            <person name="Suleau A."/>
            <person name="Swennen D."/>
            <person name="Tekaia F."/>
            <person name="Wesolowski-Louvel M."/>
            <person name="Westhof E."/>
            <person name="Wirth B."/>
            <person name="Zeniou-Meyer M."/>
            <person name="Zivanovic Y."/>
            <person name="Bolotin-Fukuhara M."/>
            <person name="Thierry A."/>
            <person name="Bouchier C."/>
            <person name="Caudron B."/>
            <person name="Scarpelli C."/>
            <person name="Gaillardin C."/>
            <person name="Weissenbach J."/>
            <person name="Wincker P."/>
            <person name="Souciet J.-L."/>
        </authorList>
    </citation>
    <scope>NUCLEOTIDE SEQUENCE [LARGE SCALE GENOMIC DNA]</scope>
    <source>
        <strain>ATCC 2001 / BCRC 20586 / JCM 3761 / NBRC 0622 / NRRL Y-65 / CBS 138</strain>
    </source>
</reference>
<keyword id="KW-0010">Activator</keyword>
<keyword id="KW-0012">Acyltransferase</keyword>
<keyword id="KW-0963">Cytoplasm</keyword>
<keyword id="KW-0479">Metal-binding</keyword>
<keyword id="KW-0539">Nucleus</keyword>
<keyword id="KW-1185">Reference proteome</keyword>
<keyword id="KW-0804">Transcription</keyword>
<keyword id="KW-0805">Transcription regulation</keyword>
<keyword id="KW-0808">Transferase</keyword>
<keyword id="KW-0819">tRNA processing</keyword>
<gene>
    <name evidence="1" type="primary">KAE1</name>
    <name type="ordered locus">CAGL0L03245g</name>
</gene>